<protein>
    <recommendedName>
        <fullName evidence="1">Ribosome maturation factor RimP</fullName>
    </recommendedName>
</protein>
<comment type="function">
    <text evidence="1">Required for maturation of 30S ribosomal subunits.</text>
</comment>
<comment type="subcellular location">
    <subcellularLocation>
        <location evidence="1">Cytoplasm</location>
    </subcellularLocation>
</comment>
<comment type="similarity">
    <text evidence="1">Belongs to the RimP family.</text>
</comment>
<evidence type="ECO:0000255" key="1">
    <source>
        <dbReference type="HAMAP-Rule" id="MF_01077"/>
    </source>
</evidence>
<gene>
    <name evidence="1" type="primary">rimP</name>
    <name type="ordered locus">Cphy_2778</name>
</gene>
<organism>
    <name type="scientific">Lachnoclostridium phytofermentans (strain ATCC 700394 / DSM 18823 / ISDg)</name>
    <name type="common">Clostridium phytofermentans</name>
    <dbReference type="NCBI Taxonomy" id="357809"/>
    <lineage>
        <taxon>Bacteria</taxon>
        <taxon>Bacillati</taxon>
        <taxon>Bacillota</taxon>
        <taxon>Clostridia</taxon>
        <taxon>Lachnospirales</taxon>
        <taxon>Lachnospiraceae</taxon>
    </lineage>
</organism>
<proteinExistence type="inferred from homology"/>
<reference key="1">
    <citation type="submission" date="2007-11" db="EMBL/GenBank/DDBJ databases">
        <title>Complete genome sequence of Clostridium phytofermentans ISDg.</title>
        <authorList>
            <person name="Leschine S.B."/>
            <person name="Warnick T.A."/>
            <person name="Blanchard J.L."/>
            <person name="Schnell D.J."/>
            <person name="Petit E.L."/>
            <person name="LaTouf W.G."/>
            <person name="Copeland A."/>
            <person name="Lucas S."/>
            <person name="Lapidus A."/>
            <person name="Barry K."/>
            <person name="Glavina del Rio T."/>
            <person name="Dalin E."/>
            <person name="Tice H."/>
            <person name="Pitluck S."/>
            <person name="Kiss H."/>
            <person name="Brettin T."/>
            <person name="Bruce D."/>
            <person name="Detter J.C."/>
            <person name="Han C."/>
            <person name="Kuske C."/>
            <person name="Schmutz J."/>
            <person name="Larimer F."/>
            <person name="Land M."/>
            <person name="Hauser L."/>
            <person name="Kyrpides N."/>
            <person name="Kim E.A."/>
            <person name="Richardson P."/>
        </authorList>
    </citation>
    <scope>NUCLEOTIDE SEQUENCE [LARGE SCALE GENOMIC DNA]</scope>
    <source>
        <strain>ATCC 700394 / DSM 18823 / ISDg</strain>
    </source>
</reference>
<name>RIMP_LACP7</name>
<keyword id="KW-0963">Cytoplasm</keyword>
<keyword id="KW-1185">Reference proteome</keyword>
<keyword id="KW-0690">Ribosome biogenesis</keyword>
<feature type="chain" id="PRO_1000136750" description="Ribosome maturation factor RimP">
    <location>
        <begin position="1"/>
        <end position="155"/>
    </location>
</feature>
<dbReference type="EMBL" id="CP000885">
    <property type="protein sequence ID" value="ABX43138.1"/>
    <property type="molecule type" value="Genomic_DNA"/>
</dbReference>
<dbReference type="RefSeq" id="WP_012200789.1">
    <property type="nucleotide sequence ID" value="NC_010001.1"/>
</dbReference>
<dbReference type="SMR" id="A9KNW8"/>
<dbReference type="STRING" id="357809.Cphy_2778"/>
<dbReference type="KEGG" id="cpy:Cphy_2778"/>
<dbReference type="eggNOG" id="COG0779">
    <property type="taxonomic scope" value="Bacteria"/>
</dbReference>
<dbReference type="HOGENOM" id="CLU_070525_2_0_9"/>
<dbReference type="OrthoDB" id="9805006at2"/>
<dbReference type="Proteomes" id="UP000000370">
    <property type="component" value="Chromosome"/>
</dbReference>
<dbReference type="GO" id="GO:0005829">
    <property type="term" value="C:cytosol"/>
    <property type="evidence" value="ECO:0007669"/>
    <property type="project" value="TreeGrafter"/>
</dbReference>
<dbReference type="GO" id="GO:0000028">
    <property type="term" value="P:ribosomal small subunit assembly"/>
    <property type="evidence" value="ECO:0007669"/>
    <property type="project" value="TreeGrafter"/>
</dbReference>
<dbReference type="GO" id="GO:0006412">
    <property type="term" value="P:translation"/>
    <property type="evidence" value="ECO:0007669"/>
    <property type="project" value="TreeGrafter"/>
</dbReference>
<dbReference type="CDD" id="cd01734">
    <property type="entry name" value="YlxS_C"/>
    <property type="match status" value="1"/>
</dbReference>
<dbReference type="FunFam" id="3.30.300.70:FF:000001">
    <property type="entry name" value="Ribosome maturation factor RimP"/>
    <property type="match status" value="1"/>
</dbReference>
<dbReference type="Gene3D" id="2.30.30.180">
    <property type="entry name" value="Ribosome maturation factor RimP, C-terminal domain"/>
    <property type="match status" value="1"/>
</dbReference>
<dbReference type="Gene3D" id="3.30.300.70">
    <property type="entry name" value="RimP-like superfamily, N-terminal"/>
    <property type="match status" value="1"/>
</dbReference>
<dbReference type="HAMAP" id="MF_01077">
    <property type="entry name" value="RimP"/>
    <property type="match status" value="1"/>
</dbReference>
<dbReference type="InterPro" id="IPR003728">
    <property type="entry name" value="Ribosome_maturation_RimP"/>
</dbReference>
<dbReference type="InterPro" id="IPR028998">
    <property type="entry name" value="RimP_C"/>
</dbReference>
<dbReference type="InterPro" id="IPR036847">
    <property type="entry name" value="RimP_C_sf"/>
</dbReference>
<dbReference type="InterPro" id="IPR028989">
    <property type="entry name" value="RimP_N"/>
</dbReference>
<dbReference type="InterPro" id="IPR035956">
    <property type="entry name" value="RimP_N_sf"/>
</dbReference>
<dbReference type="PANTHER" id="PTHR33867">
    <property type="entry name" value="RIBOSOME MATURATION FACTOR RIMP"/>
    <property type="match status" value="1"/>
</dbReference>
<dbReference type="PANTHER" id="PTHR33867:SF1">
    <property type="entry name" value="RIBOSOME MATURATION FACTOR RIMP"/>
    <property type="match status" value="1"/>
</dbReference>
<dbReference type="Pfam" id="PF17384">
    <property type="entry name" value="DUF150_C"/>
    <property type="match status" value="1"/>
</dbReference>
<dbReference type="Pfam" id="PF02576">
    <property type="entry name" value="RimP_N"/>
    <property type="match status" value="1"/>
</dbReference>
<dbReference type="SUPFAM" id="SSF74942">
    <property type="entry name" value="YhbC-like, C-terminal domain"/>
    <property type="match status" value="1"/>
</dbReference>
<dbReference type="SUPFAM" id="SSF75420">
    <property type="entry name" value="YhbC-like, N-terminal domain"/>
    <property type="match status" value="1"/>
</dbReference>
<sequence length="155" mass="18029">MTKREEYELKAEQLLTPIMEENNFELVDVEYVKEVGNWYLRAYIDKEGGITVDDCEVVSRRFSDLLDEKDFIPDAYILEVSSPGLGRQLKKDKDFKRSLGEEVEIKLYKAINKQKDFEGILTDFDQEKLIIEQADGTTMEFARADIAMVRLALDF</sequence>
<accession>A9KNW8</accession>